<feature type="chain" id="PRO_0000288231" description="tRNA (guanine-N(7)-)-methyltransferase">
    <location>
        <begin position="1"/>
        <end position="237"/>
    </location>
</feature>
<feature type="region of interest" description="Disordered" evidence="3">
    <location>
        <begin position="1"/>
        <end position="24"/>
    </location>
</feature>
<feature type="active site" evidence="1">
    <location>
        <position position="141"/>
    </location>
</feature>
<feature type="binding site" evidence="2">
    <location>
        <position position="62"/>
    </location>
    <ligand>
        <name>S-adenosyl-L-methionine</name>
        <dbReference type="ChEBI" id="CHEBI:59789"/>
    </ligand>
</feature>
<feature type="binding site" evidence="2">
    <location>
        <position position="87"/>
    </location>
    <ligand>
        <name>S-adenosyl-L-methionine</name>
        <dbReference type="ChEBI" id="CHEBI:59789"/>
    </ligand>
</feature>
<feature type="binding site" evidence="2">
    <location>
        <position position="119"/>
    </location>
    <ligand>
        <name>S-adenosyl-L-methionine</name>
        <dbReference type="ChEBI" id="CHEBI:59789"/>
    </ligand>
</feature>
<feature type="binding site" evidence="2">
    <location>
        <position position="141"/>
    </location>
    <ligand>
        <name>S-adenosyl-L-methionine</name>
        <dbReference type="ChEBI" id="CHEBI:59789"/>
    </ligand>
</feature>
<feature type="binding site" evidence="2">
    <location>
        <position position="145"/>
    </location>
    <ligand>
        <name>substrate</name>
    </ligand>
</feature>
<feature type="binding site" evidence="2">
    <location>
        <position position="177"/>
    </location>
    <ligand>
        <name>substrate</name>
    </ligand>
</feature>
<feature type="binding site" evidence="2">
    <location>
        <begin position="216"/>
        <end position="219"/>
    </location>
    <ligand>
        <name>substrate</name>
    </ligand>
</feature>
<protein>
    <recommendedName>
        <fullName evidence="2">tRNA (guanine-N(7)-)-methyltransferase</fullName>
        <ecNumber evidence="2">2.1.1.33</ecNumber>
    </recommendedName>
    <alternativeName>
        <fullName evidence="2">tRNA (guanine(46)-N(7))-methyltransferase</fullName>
    </alternativeName>
    <alternativeName>
        <fullName evidence="2">tRNA(m7G46)-methyltransferase</fullName>
    </alternativeName>
</protein>
<proteinExistence type="inferred from homology"/>
<keyword id="KW-0489">Methyltransferase</keyword>
<keyword id="KW-1185">Reference proteome</keyword>
<keyword id="KW-0949">S-adenosyl-L-methionine</keyword>
<keyword id="KW-0808">Transferase</keyword>
<keyword id="KW-0819">tRNA processing</keyword>
<comment type="function">
    <text evidence="2">Catalyzes the formation of N(7)-methylguanine at position 46 (m7G46) in tRNA.</text>
</comment>
<comment type="catalytic activity">
    <reaction evidence="2">
        <text>guanosine(46) in tRNA + S-adenosyl-L-methionine = N(7)-methylguanosine(46) in tRNA + S-adenosyl-L-homocysteine</text>
        <dbReference type="Rhea" id="RHEA:42708"/>
        <dbReference type="Rhea" id="RHEA-COMP:10188"/>
        <dbReference type="Rhea" id="RHEA-COMP:10189"/>
        <dbReference type="ChEBI" id="CHEBI:57856"/>
        <dbReference type="ChEBI" id="CHEBI:59789"/>
        <dbReference type="ChEBI" id="CHEBI:74269"/>
        <dbReference type="ChEBI" id="CHEBI:74480"/>
        <dbReference type="EC" id="2.1.1.33"/>
    </reaction>
</comment>
<comment type="pathway">
    <text evidence="2">tRNA modification; N(7)-methylguanine-tRNA biosynthesis.</text>
</comment>
<comment type="similarity">
    <text evidence="2">Belongs to the class I-like SAM-binding methyltransferase superfamily. TrmB family.</text>
</comment>
<comment type="sequence caution" evidence="4">
    <conflict type="erroneous initiation">
        <sequence resource="EMBL-CDS" id="ABF54843"/>
    </conflict>
</comment>
<organism>
    <name type="scientific">Sphingopyxis alaskensis (strain DSM 13593 / LMG 18877 / RB2256)</name>
    <name type="common">Sphingomonas alaskensis</name>
    <dbReference type="NCBI Taxonomy" id="317655"/>
    <lineage>
        <taxon>Bacteria</taxon>
        <taxon>Pseudomonadati</taxon>
        <taxon>Pseudomonadota</taxon>
        <taxon>Alphaproteobacteria</taxon>
        <taxon>Sphingomonadales</taxon>
        <taxon>Sphingomonadaceae</taxon>
        <taxon>Sphingopyxis</taxon>
    </lineage>
</organism>
<name>TRMB_SPHAL</name>
<accession>Q1GNC9</accession>
<dbReference type="EC" id="2.1.1.33" evidence="2"/>
<dbReference type="EMBL" id="CP000356">
    <property type="protein sequence ID" value="ABF54843.1"/>
    <property type="status" value="ALT_INIT"/>
    <property type="molecule type" value="Genomic_DNA"/>
</dbReference>
<dbReference type="RefSeq" id="WP_041383459.1">
    <property type="nucleotide sequence ID" value="NC_008048.1"/>
</dbReference>
<dbReference type="SMR" id="Q1GNC9"/>
<dbReference type="STRING" id="317655.Sala_3140"/>
<dbReference type="KEGG" id="sal:Sala_3140"/>
<dbReference type="eggNOG" id="COG0220">
    <property type="taxonomic scope" value="Bacteria"/>
</dbReference>
<dbReference type="HOGENOM" id="CLU_050910_0_3_5"/>
<dbReference type="OrthoDB" id="9802090at2"/>
<dbReference type="UniPathway" id="UPA00989"/>
<dbReference type="Proteomes" id="UP000006578">
    <property type="component" value="Chromosome"/>
</dbReference>
<dbReference type="GO" id="GO:0043527">
    <property type="term" value="C:tRNA methyltransferase complex"/>
    <property type="evidence" value="ECO:0007669"/>
    <property type="project" value="TreeGrafter"/>
</dbReference>
<dbReference type="GO" id="GO:0008176">
    <property type="term" value="F:tRNA (guanine(46)-N7)-methyltransferase activity"/>
    <property type="evidence" value="ECO:0007669"/>
    <property type="project" value="UniProtKB-UniRule"/>
</dbReference>
<dbReference type="Gene3D" id="3.40.50.150">
    <property type="entry name" value="Vaccinia Virus protein VP39"/>
    <property type="match status" value="1"/>
</dbReference>
<dbReference type="HAMAP" id="MF_01057">
    <property type="entry name" value="tRNA_methyltr_TrmB"/>
    <property type="match status" value="1"/>
</dbReference>
<dbReference type="InterPro" id="IPR029063">
    <property type="entry name" value="SAM-dependent_MTases_sf"/>
</dbReference>
<dbReference type="InterPro" id="IPR003358">
    <property type="entry name" value="tRNA_(Gua-N-7)_MeTrfase_Trmb"/>
</dbReference>
<dbReference type="InterPro" id="IPR055361">
    <property type="entry name" value="tRNA_methyltr_TrmB_bact"/>
</dbReference>
<dbReference type="PANTHER" id="PTHR23417">
    <property type="entry name" value="3-DEOXY-D-MANNO-OCTULOSONIC-ACID TRANSFERASE/TRNA GUANINE-N 7 - -METHYLTRANSFERASE"/>
    <property type="match status" value="1"/>
</dbReference>
<dbReference type="PANTHER" id="PTHR23417:SF14">
    <property type="entry name" value="PENTACOTRIPEPTIDE-REPEAT REGION OF PRORP DOMAIN-CONTAINING PROTEIN"/>
    <property type="match status" value="1"/>
</dbReference>
<dbReference type="Pfam" id="PF02390">
    <property type="entry name" value="Methyltransf_4"/>
    <property type="match status" value="1"/>
</dbReference>
<dbReference type="SUPFAM" id="SSF53335">
    <property type="entry name" value="S-adenosyl-L-methionine-dependent methyltransferases"/>
    <property type="match status" value="1"/>
</dbReference>
<dbReference type="PROSITE" id="PS51625">
    <property type="entry name" value="SAM_MT_TRMB"/>
    <property type="match status" value="1"/>
</dbReference>
<gene>
    <name evidence="2" type="primary">trmB</name>
    <name type="ordered locus">Sala_3140</name>
</gene>
<evidence type="ECO:0000250" key="1"/>
<evidence type="ECO:0000255" key="2">
    <source>
        <dbReference type="HAMAP-Rule" id="MF_01057"/>
    </source>
</evidence>
<evidence type="ECO:0000256" key="3">
    <source>
        <dbReference type="SAM" id="MobiDB-lite"/>
    </source>
</evidence>
<evidence type="ECO:0000305" key="4"/>
<sequence length="237" mass="26942">MTAHKPGDPTTLNRLYGRSKGKPLRAGQQDLVDTLLPQIAVPLDGEVTARRLFGFDRPLHFEIGFGGGEHMAARADMLPDHGFIGAEPFINGVAQALVHVAGDHGQHPPLGNVRIHHGDALEVLRRIPDGALAFVYLLHPDPWPKARHAKRRMMNDGPLDLIAAKLKPGGEFRFGTDHPIYLRHALMVMRRHRHQFEWLAKDARDFQVRPGGWPETRYEAKARAQGHEVWYFRWRRR</sequence>
<reference key="1">
    <citation type="journal article" date="2009" name="Proc. Natl. Acad. Sci. U.S.A.">
        <title>The genomic basis of trophic strategy in marine bacteria.</title>
        <authorList>
            <person name="Lauro F.M."/>
            <person name="McDougald D."/>
            <person name="Thomas T."/>
            <person name="Williams T.J."/>
            <person name="Egan S."/>
            <person name="Rice S."/>
            <person name="DeMaere M.Z."/>
            <person name="Ting L."/>
            <person name="Ertan H."/>
            <person name="Johnson J."/>
            <person name="Ferriera S."/>
            <person name="Lapidus A."/>
            <person name="Anderson I."/>
            <person name="Kyrpides N."/>
            <person name="Munk A.C."/>
            <person name="Detter C."/>
            <person name="Han C.S."/>
            <person name="Brown M.V."/>
            <person name="Robb F.T."/>
            <person name="Kjelleberg S."/>
            <person name="Cavicchioli R."/>
        </authorList>
    </citation>
    <scope>NUCLEOTIDE SEQUENCE [LARGE SCALE GENOMIC DNA]</scope>
    <source>
        <strain>DSM 13593 / LMG 18877 / RB2256</strain>
    </source>
</reference>